<proteinExistence type="inferred from homology"/>
<protein>
    <recommendedName>
        <fullName evidence="1">Ribose-5-phosphate isomerase A</fullName>
        <ecNumber evidence="1">5.3.1.6</ecNumber>
    </recommendedName>
    <alternativeName>
        <fullName evidence="1">Phosphoriboisomerase A</fullName>
        <shortName evidence="1">PRI</shortName>
    </alternativeName>
</protein>
<comment type="function">
    <text evidence="1">Catalyzes the reversible conversion of ribose-5-phosphate to ribulose 5-phosphate.</text>
</comment>
<comment type="catalytic activity">
    <reaction evidence="1">
        <text>aldehydo-D-ribose 5-phosphate = D-ribulose 5-phosphate</text>
        <dbReference type="Rhea" id="RHEA:14657"/>
        <dbReference type="ChEBI" id="CHEBI:58121"/>
        <dbReference type="ChEBI" id="CHEBI:58273"/>
        <dbReference type="EC" id="5.3.1.6"/>
    </reaction>
</comment>
<comment type="pathway">
    <text evidence="1">Carbohydrate degradation; pentose phosphate pathway; D-ribose 5-phosphate from D-ribulose 5-phosphate (non-oxidative stage): step 1/1.</text>
</comment>
<comment type="subunit">
    <text evidence="1">Homodimer.</text>
</comment>
<comment type="similarity">
    <text evidence="1">Belongs to the ribose 5-phosphate isomerase family.</text>
</comment>
<feature type="chain" id="PRO_1000017015" description="Ribose-5-phosphate isomerase A">
    <location>
        <begin position="1"/>
        <end position="225"/>
    </location>
</feature>
<feature type="active site" description="Proton acceptor" evidence="1">
    <location>
        <position position="104"/>
    </location>
</feature>
<feature type="binding site" evidence="1">
    <location>
        <begin position="26"/>
        <end position="29"/>
    </location>
    <ligand>
        <name>substrate</name>
    </ligand>
</feature>
<feature type="binding site" evidence="1">
    <location>
        <begin position="82"/>
        <end position="85"/>
    </location>
    <ligand>
        <name>substrate</name>
    </ligand>
</feature>
<feature type="binding site" evidence="1">
    <location>
        <begin position="95"/>
        <end position="98"/>
    </location>
    <ligand>
        <name>substrate</name>
    </ligand>
</feature>
<feature type="binding site" evidence="1">
    <location>
        <position position="122"/>
    </location>
    <ligand>
        <name>substrate</name>
    </ligand>
</feature>
<keyword id="KW-0413">Isomerase</keyword>
<keyword id="KW-1185">Reference proteome</keyword>
<sequence length="225" mass="24571">MENLKKLAGIKAAEFVQSGMIVGLGTGSTAYYFVEEIGRRIKEEGLQITAVTTSSVTSKQAEGLGIPLKSIDDVDQVDVTVDGADEVDSAFNGIKGGGGALLMEKVVAVPTKHYIWVVDESKMVEKLGAFKLPVEVVQYGAEQLFRRFERAGYKPAFREKDDQRFVTDMQNFIIDLDLGVIENSVEFAQELDHVVGVVEHGLFNQMVDKVIVAGKSGLQVLEANK</sequence>
<organism>
    <name type="scientific">Streptococcus sanguinis (strain SK36)</name>
    <dbReference type="NCBI Taxonomy" id="388919"/>
    <lineage>
        <taxon>Bacteria</taxon>
        <taxon>Bacillati</taxon>
        <taxon>Bacillota</taxon>
        <taxon>Bacilli</taxon>
        <taxon>Lactobacillales</taxon>
        <taxon>Streptococcaceae</taxon>
        <taxon>Streptococcus</taxon>
    </lineage>
</organism>
<name>RPIA_STRSV</name>
<accession>A3CNA9</accession>
<dbReference type="EC" id="5.3.1.6" evidence="1"/>
<dbReference type="EMBL" id="CP000387">
    <property type="protein sequence ID" value="ABN44664.1"/>
    <property type="molecule type" value="Genomic_DNA"/>
</dbReference>
<dbReference type="RefSeq" id="WP_002917153.1">
    <property type="nucleotide sequence ID" value="NC_009009.1"/>
</dbReference>
<dbReference type="RefSeq" id="YP_001035214.1">
    <property type="nucleotide sequence ID" value="NC_009009.1"/>
</dbReference>
<dbReference type="SMR" id="A3CNA9"/>
<dbReference type="STRING" id="388919.SSA_1261"/>
<dbReference type="KEGG" id="ssa:SSA_1261"/>
<dbReference type="PATRIC" id="fig|388919.9.peg.1201"/>
<dbReference type="eggNOG" id="COG0120">
    <property type="taxonomic scope" value="Bacteria"/>
</dbReference>
<dbReference type="HOGENOM" id="CLU_056590_1_0_9"/>
<dbReference type="OrthoDB" id="5870696at2"/>
<dbReference type="UniPathway" id="UPA00115">
    <property type="reaction ID" value="UER00412"/>
</dbReference>
<dbReference type="Proteomes" id="UP000002148">
    <property type="component" value="Chromosome"/>
</dbReference>
<dbReference type="GO" id="GO:0004751">
    <property type="term" value="F:ribose-5-phosphate isomerase activity"/>
    <property type="evidence" value="ECO:0007669"/>
    <property type="project" value="UniProtKB-UniRule"/>
</dbReference>
<dbReference type="GO" id="GO:0009052">
    <property type="term" value="P:pentose-phosphate shunt, non-oxidative branch"/>
    <property type="evidence" value="ECO:0007669"/>
    <property type="project" value="UniProtKB-UniRule"/>
</dbReference>
<dbReference type="CDD" id="cd01398">
    <property type="entry name" value="RPI_A"/>
    <property type="match status" value="1"/>
</dbReference>
<dbReference type="FunFam" id="3.40.50.1360:FF:000001">
    <property type="entry name" value="Ribose-5-phosphate isomerase A"/>
    <property type="match status" value="1"/>
</dbReference>
<dbReference type="Gene3D" id="3.30.70.260">
    <property type="match status" value="1"/>
</dbReference>
<dbReference type="Gene3D" id="3.40.50.1360">
    <property type="match status" value="1"/>
</dbReference>
<dbReference type="HAMAP" id="MF_00170">
    <property type="entry name" value="Rib_5P_isom_A"/>
    <property type="match status" value="1"/>
</dbReference>
<dbReference type="InterPro" id="IPR037171">
    <property type="entry name" value="NagB/RpiA_transferase-like"/>
</dbReference>
<dbReference type="InterPro" id="IPR050262">
    <property type="entry name" value="Ribose-5P_isomerase"/>
</dbReference>
<dbReference type="InterPro" id="IPR020672">
    <property type="entry name" value="Ribose5P_isomerase_typA_subgr"/>
</dbReference>
<dbReference type="InterPro" id="IPR004788">
    <property type="entry name" value="Ribose5P_isomerase_type_A"/>
</dbReference>
<dbReference type="NCBIfam" id="NF001924">
    <property type="entry name" value="PRK00702.1"/>
    <property type="match status" value="1"/>
</dbReference>
<dbReference type="NCBIfam" id="TIGR00021">
    <property type="entry name" value="rpiA"/>
    <property type="match status" value="1"/>
</dbReference>
<dbReference type="PANTHER" id="PTHR43748">
    <property type="entry name" value="RIBOSE-5-PHOSPHATE ISOMERASE 3, CHLOROPLASTIC-RELATED"/>
    <property type="match status" value="1"/>
</dbReference>
<dbReference type="PANTHER" id="PTHR43748:SF3">
    <property type="entry name" value="RIBOSE-5-PHOSPHATE ISOMERASE 3, CHLOROPLASTIC-RELATED"/>
    <property type="match status" value="1"/>
</dbReference>
<dbReference type="Pfam" id="PF06026">
    <property type="entry name" value="Rib_5-P_isom_A"/>
    <property type="match status" value="1"/>
</dbReference>
<dbReference type="SUPFAM" id="SSF75445">
    <property type="entry name" value="D-ribose-5-phosphate isomerase (RpiA), lid domain"/>
    <property type="match status" value="1"/>
</dbReference>
<dbReference type="SUPFAM" id="SSF100950">
    <property type="entry name" value="NagB/RpiA/CoA transferase-like"/>
    <property type="match status" value="1"/>
</dbReference>
<gene>
    <name evidence="1" type="primary">rpiA</name>
    <name type="ordered locus">SSA_1261</name>
</gene>
<reference key="1">
    <citation type="journal article" date="2007" name="J. Bacteriol.">
        <title>Genome of the opportunistic pathogen Streptococcus sanguinis.</title>
        <authorList>
            <person name="Xu P."/>
            <person name="Alves J.M."/>
            <person name="Kitten T."/>
            <person name="Brown A."/>
            <person name="Chen Z."/>
            <person name="Ozaki L.S."/>
            <person name="Manque P."/>
            <person name="Ge X."/>
            <person name="Serrano M.G."/>
            <person name="Puiu D."/>
            <person name="Hendricks S."/>
            <person name="Wang Y."/>
            <person name="Chaplin M.D."/>
            <person name="Akan D."/>
            <person name="Paik S."/>
            <person name="Peterson D.L."/>
            <person name="Macrina F.L."/>
            <person name="Buck G.A."/>
        </authorList>
    </citation>
    <scope>NUCLEOTIDE SEQUENCE [LARGE SCALE GENOMIC DNA]</scope>
    <source>
        <strain>SK36</strain>
    </source>
</reference>
<evidence type="ECO:0000255" key="1">
    <source>
        <dbReference type="HAMAP-Rule" id="MF_00170"/>
    </source>
</evidence>